<keyword id="KW-0997">Cell inner membrane</keyword>
<keyword id="KW-1003">Cell membrane</keyword>
<keyword id="KW-0472">Membrane</keyword>
<keyword id="KW-1185">Reference proteome</keyword>
<keyword id="KW-0812">Transmembrane</keyword>
<keyword id="KW-1133">Transmembrane helix</keyword>
<name>Y3061_PARXL</name>
<feature type="chain" id="PRO_0000391023" description="UPF0761 membrane protein Bxeno_A3061">
    <location>
        <begin position="1"/>
        <end position="436"/>
    </location>
</feature>
<feature type="transmembrane region" description="Helical" evidence="1">
    <location>
        <begin position="42"/>
        <end position="62"/>
    </location>
</feature>
<feature type="transmembrane region" description="Helical" evidence="1">
    <location>
        <begin position="96"/>
        <end position="116"/>
    </location>
</feature>
<feature type="transmembrane region" description="Helical" evidence="1">
    <location>
        <begin position="136"/>
        <end position="156"/>
    </location>
</feature>
<feature type="transmembrane region" description="Helical" evidence="1">
    <location>
        <begin position="180"/>
        <end position="200"/>
    </location>
</feature>
<feature type="transmembrane region" description="Helical" evidence="1">
    <location>
        <begin position="210"/>
        <end position="230"/>
    </location>
</feature>
<feature type="transmembrane region" description="Helical" evidence="1">
    <location>
        <begin position="241"/>
        <end position="261"/>
    </location>
</feature>
<sequence>MSRVRFDLDTLKRLAQFAAQRSSEDRIPQVAGSLTFTTMLSLVPLATVAFALFTAFPIFASFQMSLQIFLADHLMPAQLNSQIFNYLNQFASKAKGLTTIGMIFLFVTAVMTMMTVESAFNVIWRVRKARPIAQRILVYWAIITLGPILIGVSLSISSYLFTQSMTFTAAQRMTPVIEWALAGAALPLTAAAFTILYVYLPNCRVEWRDAVIGGVTAAIAFELAKRGFGYYVRRIPTYTAVYGAFAAVPLFLLWMYLCWFITLAGAMIASALPAIRIGQFHRPTFEGSNLFDSLELLARLSEARDAGKRGYTVPELSRMLRRDMGTTINLLEKLEEIEWIARLQEDGARPHFLLLANPAQITVERLFGLFVIDRAELGYQLELASTRVDGEMLLAALENDKLKVTLAALLTARAAARAAQAAENESGTSSMPHQAA</sequence>
<comment type="subcellular location">
    <subcellularLocation>
        <location evidence="1">Cell inner membrane</location>
        <topology evidence="1">Multi-pass membrane protein</topology>
    </subcellularLocation>
</comment>
<comment type="similarity">
    <text evidence="1">Belongs to the UPF0761 family.</text>
</comment>
<organism>
    <name type="scientific">Paraburkholderia xenovorans (strain LB400)</name>
    <dbReference type="NCBI Taxonomy" id="266265"/>
    <lineage>
        <taxon>Bacteria</taxon>
        <taxon>Pseudomonadati</taxon>
        <taxon>Pseudomonadota</taxon>
        <taxon>Betaproteobacteria</taxon>
        <taxon>Burkholderiales</taxon>
        <taxon>Burkholderiaceae</taxon>
        <taxon>Paraburkholderia</taxon>
    </lineage>
</organism>
<protein>
    <recommendedName>
        <fullName evidence="1">UPF0761 membrane protein Bxeno_A3061</fullName>
    </recommendedName>
</protein>
<gene>
    <name type="ordered locus">Bxeno_A3061</name>
    <name type="ORF">Bxe_A1354</name>
</gene>
<reference key="1">
    <citation type="journal article" date="2006" name="Proc. Natl. Acad. Sci. U.S.A.">
        <title>Burkholderia xenovorans LB400 harbors a multi-replicon, 9.73-Mbp genome shaped for versatility.</title>
        <authorList>
            <person name="Chain P.S.G."/>
            <person name="Denef V.J."/>
            <person name="Konstantinidis K.T."/>
            <person name="Vergez L.M."/>
            <person name="Agullo L."/>
            <person name="Reyes V.L."/>
            <person name="Hauser L."/>
            <person name="Cordova M."/>
            <person name="Gomez L."/>
            <person name="Gonzalez M."/>
            <person name="Land M."/>
            <person name="Lao V."/>
            <person name="Larimer F."/>
            <person name="LiPuma J.J."/>
            <person name="Mahenthiralingam E."/>
            <person name="Malfatti S.A."/>
            <person name="Marx C.J."/>
            <person name="Parnell J.J."/>
            <person name="Ramette A."/>
            <person name="Richardson P."/>
            <person name="Seeger M."/>
            <person name="Smith D."/>
            <person name="Spilker T."/>
            <person name="Sul W.J."/>
            <person name="Tsoi T.V."/>
            <person name="Ulrich L.E."/>
            <person name="Zhulin I.B."/>
            <person name="Tiedje J.M."/>
        </authorList>
    </citation>
    <scope>NUCLEOTIDE SEQUENCE [LARGE SCALE GENOMIC DNA]</scope>
    <source>
        <strain>LB400</strain>
    </source>
</reference>
<proteinExistence type="inferred from homology"/>
<dbReference type="EMBL" id="CP000270">
    <property type="protein sequence ID" value="ABE31599.1"/>
    <property type="molecule type" value="Genomic_DNA"/>
</dbReference>
<dbReference type="SMR" id="Q13WE0"/>
<dbReference type="STRING" id="266265.Bxe_A1354"/>
<dbReference type="KEGG" id="bxb:DR64_3514"/>
<dbReference type="KEGG" id="bxe:Bxe_A1354"/>
<dbReference type="PATRIC" id="fig|266265.5.peg.3216"/>
<dbReference type="eggNOG" id="COG1295">
    <property type="taxonomic scope" value="Bacteria"/>
</dbReference>
<dbReference type="OrthoDB" id="9808671at2"/>
<dbReference type="Proteomes" id="UP000001817">
    <property type="component" value="Chromosome 1"/>
</dbReference>
<dbReference type="GO" id="GO:0005886">
    <property type="term" value="C:plasma membrane"/>
    <property type="evidence" value="ECO:0007669"/>
    <property type="project" value="UniProtKB-SubCell"/>
</dbReference>
<dbReference type="HAMAP" id="MF_00672">
    <property type="entry name" value="UPF0761"/>
    <property type="match status" value="1"/>
</dbReference>
<dbReference type="InterPro" id="IPR023679">
    <property type="entry name" value="UPF0761_bac"/>
</dbReference>
<dbReference type="InterPro" id="IPR017039">
    <property type="entry name" value="Virul_fac_BrkB"/>
</dbReference>
<dbReference type="NCBIfam" id="TIGR00765">
    <property type="entry name" value="yihY_not_rbn"/>
    <property type="match status" value="1"/>
</dbReference>
<dbReference type="PANTHER" id="PTHR30213">
    <property type="entry name" value="INNER MEMBRANE PROTEIN YHJD"/>
    <property type="match status" value="1"/>
</dbReference>
<dbReference type="PANTHER" id="PTHR30213:SF0">
    <property type="entry name" value="UPF0761 MEMBRANE PROTEIN YIHY"/>
    <property type="match status" value="1"/>
</dbReference>
<dbReference type="Pfam" id="PF03631">
    <property type="entry name" value="Virul_fac_BrkB"/>
    <property type="match status" value="1"/>
</dbReference>
<evidence type="ECO:0000255" key="1">
    <source>
        <dbReference type="HAMAP-Rule" id="MF_00672"/>
    </source>
</evidence>
<accession>Q13WE0</accession>